<sequence length="373" mass="40512">MATAGKVIKCKAAVAWEAGKPLSMEEVEDAPPQAMEVRDKILYTALCHTDVYFWEANGQTPVFPRILGHEAGGIVESVGEGVTELVPGDHVLPVFTGECKECAHCMSEESNLCDLLRINVDRGVMIDDGQSRFTIDGKPIFHFLGTSTFSEYTVIHVGCVAKIDPEAPLDKVCLLSCGISTGLGATLNVTKPKKGMTVAIFGLGAVGLAAMEGARMSGASRIIGVDLNPAKHEQAKKFGCTDFVNPKDHTKPVQEVIVEMTDGGVNRAVECTGNADAMISAFECVHDGWGVAHKEAVFKTHPMNFLNERTLRGTFFGNYKPRTGLPGVVDMYMRKELELDKFITHSLPFSQINTAFDLMLRGEGLRCVIRSEE</sequence>
<organism>
    <name type="scientific">Hordeum vulgare</name>
    <name type="common">Barley</name>
    <dbReference type="NCBI Taxonomy" id="4513"/>
    <lineage>
        <taxon>Eukaryota</taxon>
        <taxon>Viridiplantae</taxon>
        <taxon>Streptophyta</taxon>
        <taxon>Embryophyta</taxon>
        <taxon>Tracheophyta</taxon>
        <taxon>Spermatophyta</taxon>
        <taxon>Magnoliopsida</taxon>
        <taxon>Liliopsida</taxon>
        <taxon>Poales</taxon>
        <taxon>Poaceae</taxon>
        <taxon>BOP clade</taxon>
        <taxon>Pooideae</taxon>
        <taxon>Triticodae</taxon>
        <taxon>Triticeae</taxon>
        <taxon>Hordeinae</taxon>
        <taxon>Hordeum</taxon>
    </lineage>
</organism>
<evidence type="ECO:0000250" key="1">
    <source>
        <dbReference type="UniProtKB" id="P00327"/>
    </source>
</evidence>
<evidence type="ECO:0000250" key="2">
    <source>
        <dbReference type="UniProtKB" id="P06525"/>
    </source>
</evidence>
<evidence type="ECO:0000269" key="3">
    <source ref="1"/>
</evidence>
<evidence type="ECO:0000305" key="4"/>
<gene>
    <name type="primary">ADH2</name>
</gene>
<protein>
    <recommendedName>
        <fullName>Alcohol dehydrogenase 2</fullName>
        <ecNumber evidence="2">1.1.1.1</ecNumber>
    </recommendedName>
</protein>
<accession>P10847</accession>
<dbReference type="EC" id="1.1.1.1" evidence="2"/>
<dbReference type="EMBL" id="X12733">
    <property type="protein sequence ID" value="CAA31230.1"/>
    <property type="molecule type" value="Genomic_DNA"/>
</dbReference>
<dbReference type="PIR" id="S04039">
    <property type="entry name" value="S04039"/>
</dbReference>
<dbReference type="SMR" id="P10847"/>
<dbReference type="IntAct" id="P10847">
    <property type="interactions" value="1"/>
</dbReference>
<dbReference type="ExpressionAtlas" id="P10847">
    <property type="expression patterns" value="baseline and differential"/>
</dbReference>
<dbReference type="GO" id="GO:0005829">
    <property type="term" value="C:cytosol"/>
    <property type="evidence" value="ECO:0007669"/>
    <property type="project" value="TreeGrafter"/>
</dbReference>
<dbReference type="GO" id="GO:0004022">
    <property type="term" value="F:alcohol dehydrogenase (NAD+) activity"/>
    <property type="evidence" value="ECO:0007669"/>
    <property type="project" value="UniProtKB-EC"/>
</dbReference>
<dbReference type="GO" id="GO:0051903">
    <property type="term" value="F:S-(hydroxymethyl)glutathione dehydrogenase [NAD(P)+] activity"/>
    <property type="evidence" value="ECO:0007669"/>
    <property type="project" value="TreeGrafter"/>
</dbReference>
<dbReference type="GO" id="GO:0008270">
    <property type="term" value="F:zinc ion binding"/>
    <property type="evidence" value="ECO:0007669"/>
    <property type="project" value="InterPro"/>
</dbReference>
<dbReference type="GO" id="GO:0046294">
    <property type="term" value="P:formaldehyde catabolic process"/>
    <property type="evidence" value="ECO:0007669"/>
    <property type="project" value="TreeGrafter"/>
</dbReference>
<dbReference type="CDD" id="cd08301">
    <property type="entry name" value="alcohol_DH_plants"/>
    <property type="match status" value="1"/>
</dbReference>
<dbReference type="FunFam" id="3.90.180.10:FF:000067">
    <property type="entry name" value="alcohol dehydrogenase 1-like isoform X1"/>
    <property type="match status" value="1"/>
</dbReference>
<dbReference type="FunFam" id="3.40.50.720:FF:001292">
    <property type="entry name" value="Alcohol dehydrogenase class-P"/>
    <property type="match status" value="1"/>
</dbReference>
<dbReference type="Gene3D" id="3.90.180.10">
    <property type="entry name" value="Medium-chain alcohol dehydrogenases, catalytic domain"/>
    <property type="match status" value="1"/>
</dbReference>
<dbReference type="Gene3D" id="3.40.50.720">
    <property type="entry name" value="NAD(P)-binding Rossmann-like Domain"/>
    <property type="match status" value="1"/>
</dbReference>
<dbReference type="InterPro" id="IPR013149">
    <property type="entry name" value="ADH-like_C"/>
</dbReference>
<dbReference type="InterPro" id="IPR013154">
    <property type="entry name" value="ADH-like_N"/>
</dbReference>
<dbReference type="InterPro" id="IPR002328">
    <property type="entry name" value="ADH_Zn_CS"/>
</dbReference>
<dbReference type="InterPro" id="IPR011032">
    <property type="entry name" value="GroES-like_sf"/>
</dbReference>
<dbReference type="InterPro" id="IPR036291">
    <property type="entry name" value="NAD(P)-bd_dom_sf"/>
</dbReference>
<dbReference type="PANTHER" id="PTHR43880">
    <property type="entry name" value="ALCOHOL DEHYDROGENASE"/>
    <property type="match status" value="1"/>
</dbReference>
<dbReference type="PANTHER" id="PTHR43880:SF66">
    <property type="entry name" value="OS11G0210600 PROTEIN"/>
    <property type="match status" value="1"/>
</dbReference>
<dbReference type="Pfam" id="PF08240">
    <property type="entry name" value="ADH_N"/>
    <property type="match status" value="1"/>
</dbReference>
<dbReference type="Pfam" id="PF00107">
    <property type="entry name" value="ADH_zinc_N"/>
    <property type="match status" value="1"/>
</dbReference>
<dbReference type="SUPFAM" id="SSF50129">
    <property type="entry name" value="GroES-like"/>
    <property type="match status" value="2"/>
</dbReference>
<dbReference type="SUPFAM" id="SSF51735">
    <property type="entry name" value="NAD(P)-binding Rossmann-fold domains"/>
    <property type="match status" value="1"/>
</dbReference>
<dbReference type="PROSITE" id="PS00059">
    <property type="entry name" value="ADH_ZINC"/>
    <property type="match status" value="1"/>
</dbReference>
<reference key="1">
    <citation type="journal article" date="1988" name="Plant Mol. Biol.">
        <title>Molecular analysis of the alcohol dehydrogenase gene family of barley.</title>
        <authorList>
            <person name="Trick M."/>
            <person name="Dennis E.S."/>
            <person name="Edwards K.J.R."/>
            <person name="Peacock W.J."/>
        </authorList>
        <dbReference type="AGRICOLA" id="IND92000066"/>
    </citation>
    <scope>NUCLEOTIDE SEQUENCE [GENOMIC DNA]</scope>
    <scope>HOMODIMER</scope>
    <source>
        <strain>cv. Proctor</strain>
    </source>
</reference>
<proteinExistence type="inferred from homology"/>
<feature type="chain" id="PRO_0000160700" description="Alcohol dehydrogenase 2">
    <location>
        <begin position="1"/>
        <end position="373"/>
    </location>
</feature>
<feature type="binding site" evidence="2">
    <location>
        <position position="47"/>
    </location>
    <ligand>
        <name>Zn(2+)</name>
        <dbReference type="ChEBI" id="CHEBI:29105"/>
        <label>1</label>
        <note>catalytic</note>
    </ligand>
</feature>
<feature type="binding site" evidence="2">
    <location>
        <position position="49"/>
    </location>
    <ligand>
        <name>an alcohol</name>
        <dbReference type="ChEBI" id="CHEBI:30879"/>
    </ligand>
</feature>
<feature type="binding site" evidence="2">
    <location>
        <position position="49"/>
    </location>
    <ligand>
        <name>NAD(+)</name>
        <dbReference type="ChEBI" id="CHEBI:57540"/>
    </ligand>
</feature>
<feature type="binding site" evidence="2">
    <location>
        <position position="49"/>
    </location>
    <ligand>
        <name>Zn(2+)</name>
        <dbReference type="ChEBI" id="CHEBI:29105"/>
        <label>1</label>
        <note>catalytic</note>
    </ligand>
</feature>
<feature type="binding site" evidence="1">
    <location>
        <position position="69"/>
    </location>
    <ligand>
        <name>an alcohol</name>
        <dbReference type="ChEBI" id="CHEBI:30879"/>
    </ligand>
</feature>
<feature type="binding site" evidence="2">
    <location>
        <position position="69"/>
    </location>
    <ligand>
        <name>Zn(2+)</name>
        <dbReference type="ChEBI" id="CHEBI:29105"/>
        <label>1</label>
        <note>catalytic</note>
    </ligand>
</feature>
<feature type="binding site" evidence="2">
    <location>
        <position position="99"/>
    </location>
    <ligand>
        <name>Zn(2+)</name>
        <dbReference type="ChEBI" id="CHEBI:29105"/>
        <label>2</label>
    </ligand>
</feature>
<feature type="binding site" evidence="2">
    <location>
        <position position="102"/>
    </location>
    <ligand>
        <name>Zn(2+)</name>
        <dbReference type="ChEBI" id="CHEBI:29105"/>
        <label>2</label>
    </ligand>
</feature>
<feature type="binding site" evidence="2">
    <location>
        <position position="105"/>
    </location>
    <ligand>
        <name>Zn(2+)</name>
        <dbReference type="ChEBI" id="CHEBI:29105"/>
        <label>2</label>
    </ligand>
</feature>
<feature type="binding site" evidence="2">
    <location>
        <position position="113"/>
    </location>
    <ligand>
        <name>Zn(2+)</name>
        <dbReference type="ChEBI" id="CHEBI:29105"/>
        <label>2</label>
    </ligand>
</feature>
<feature type="binding site" evidence="2">
    <location>
        <position position="177"/>
    </location>
    <ligand>
        <name>Zn(2+)</name>
        <dbReference type="ChEBI" id="CHEBI:29105"/>
        <label>1</label>
        <note>catalytic</note>
    </ligand>
</feature>
<feature type="binding site" evidence="2">
    <location>
        <begin position="202"/>
        <end position="207"/>
    </location>
    <ligand>
        <name>NAD(+)</name>
        <dbReference type="ChEBI" id="CHEBI:57540"/>
    </ligand>
</feature>
<feature type="binding site" evidence="2">
    <location>
        <position position="226"/>
    </location>
    <ligand>
        <name>NAD(+)</name>
        <dbReference type="ChEBI" id="CHEBI:57540"/>
    </ligand>
</feature>
<feature type="binding site" evidence="2">
    <location>
        <position position="231"/>
    </location>
    <ligand>
        <name>NAD(+)</name>
        <dbReference type="ChEBI" id="CHEBI:57540"/>
    </ligand>
</feature>
<feature type="binding site" evidence="2">
    <location>
        <position position="272"/>
    </location>
    <ligand>
        <name>NAD(+)</name>
        <dbReference type="ChEBI" id="CHEBI:57540"/>
    </ligand>
</feature>
<feature type="binding site" evidence="2">
    <location>
        <position position="316"/>
    </location>
    <ligand>
        <name>NAD(+)</name>
        <dbReference type="ChEBI" id="CHEBI:57540"/>
    </ligand>
</feature>
<feature type="binding site" evidence="2">
    <location>
        <position position="366"/>
    </location>
    <ligand>
        <name>NAD(+)</name>
        <dbReference type="ChEBI" id="CHEBI:57540"/>
    </ligand>
</feature>
<comment type="catalytic activity">
    <reaction evidence="2">
        <text>a primary alcohol + NAD(+) = an aldehyde + NADH + H(+)</text>
        <dbReference type="Rhea" id="RHEA:10736"/>
        <dbReference type="ChEBI" id="CHEBI:15378"/>
        <dbReference type="ChEBI" id="CHEBI:15734"/>
        <dbReference type="ChEBI" id="CHEBI:17478"/>
        <dbReference type="ChEBI" id="CHEBI:57540"/>
        <dbReference type="ChEBI" id="CHEBI:57945"/>
        <dbReference type="EC" id="1.1.1.1"/>
    </reaction>
</comment>
<comment type="catalytic activity">
    <reaction evidence="2">
        <text>a secondary alcohol + NAD(+) = a ketone + NADH + H(+)</text>
        <dbReference type="Rhea" id="RHEA:10740"/>
        <dbReference type="ChEBI" id="CHEBI:15378"/>
        <dbReference type="ChEBI" id="CHEBI:17087"/>
        <dbReference type="ChEBI" id="CHEBI:35681"/>
        <dbReference type="ChEBI" id="CHEBI:57540"/>
        <dbReference type="ChEBI" id="CHEBI:57945"/>
        <dbReference type="EC" id="1.1.1.1"/>
    </reaction>
</comment>
<comment type="cofactor">
    <cofactor evidence="2">
        <name>Zn(2+)</name>
        <dbReference type="ChEBI" id="CHEBI:29105"/>
    </cofactor>
    <text evidence="2">Binds 2 Zn(2+) ions per subunit.</text>
</comment>
<comment type="subunit">
    <text evidence="3">Homodimer.</text>
</comment>
<comment type="subcellular location">
    <subcellularLocation>
        <location evidence="2">Cytoplasm</location>
    </subcellularLocation>
</comment>
<comment type="similarity">
    <text evidence="4">Belongs to the zinc-containing alcohol dehydrogenase family.</text>
</comment>
<keyword id="KW-0963">Cytoplasm</keyword>
<keyword id="KW-0479">Metal-binding</keyword>
<keyword id="KW-0520">NAD</keyword>
<keyword id="KW-0560">Oxidoreductase</keyword>
<keyword id="KW-0862">Zinc</keyword>
<name>ADH2_HORVU</name>